<evidence type="ECO:0000255" key="1">
    <source>
        <dbReference type="HAMAP-Rule" id="MF_00068"/>
    </source>
</evidence>
<keyword id="KW-0119">Carbohydrate metabolism</keyword>
<keyword id="KW-0456">Lyase</keyword>
<protein>
    <recommendedName>
        <fullName evidence="1">N-acetylmuramic acid 6-phosphate etherase</fullName>
        <shortName evidence="1">MurNAc-6-P etherase</shortName>
        <ecNumber evidence="1">4.2.1.126</ecNumber>
    </recommendedName>
    <alternativeName>
        <fullName evidence="1">N-acetylmuramic acid 6-phosphate hydrolase</fullName>
    </alternativeName>
    <alternativeName>
        <fullName evidence="1">N-acetylmuramic acid 6-phosphate lyase</fullName>
    </alternativeName>
</protein>
<accession>A4WDD1</accession>
<name>MURQ_ENT38</name>
<reference key="1">
    <citation type="journal article" date="2010" name="PLoS Genet.">
        <title>Genome sequence of the plant growth promoting endophytic bacterium Enterobacter sp. 638.</title>
        <authorList>
            <person name="Taghavi S."/>
            <person name="van der Lelie D."/>
            <person name="Hoffman A."/>
            <person name="Zhang Y.B."/>
            <person name="Walla M.D."/>
            <person name="Vangronsveld J."/>
            <person name="Newman L."/>
            <person name="Monchy S."/>
        </authorList>
    </citation>
    <scope>NUCLEOTIDE SEQUENCE [LARGE SCALE GENOMIC DNA]</scope>
    <source>
        <strain>638</strain>
    </source>
</reference>
<dbReference type="EC" id="4.2.1.126" evidence="1"/>
<dbReference type="EMBL" id="CP000653">
    <property type="protein sequence ID" value="ABP61711.1"/>
    <property type="molecule type" value="Genomic_DNA"/>
</dbReference>
<dbReference type="RefSeq" id="WP_015960041.1">
    <property type="nucleotide sequence ID" value="NC_009436.1"/>
</dbReference>
<dbReference type="SMR" id="A4WDD1"/>
<dbReference type="STRING" id="399742.Ent638_3047"/>
<dbReference type="KEGG" id="ent:Ent638_3047"/>
<dbReference type="eggNOG" id="COG2103">
    <property type="taxonomic scope" value="Bacteria"/>
</dbReference>
<dbReference type="HOGENOM" id="CLU_049049_1_1_6"/>
<dbReference type="OrthoDB" id="9813395at2"/>
<dbReference type="UniPathway" id="UPA00342"/>
<dbReference type="UniPathway" id="UPA00343"/>
<dbReference type="UniPathway" id="UPA00544"/>
<dbReference type="Proteomes" id="UP000000230">
    <property type="component" value="Chromosome"/>
</dbReference>
<dbReference type="GO" id="GO:0097367">
    <property type="term" value="F:carbohydrate derivative binding"/>
    <property type="evidence" value="ECO:0007669"/>
    <property type="project" value="InterPro"/>
</dbReference>
<dbReference type="GO" id="GO:0016835">
    <property type="term" value="F:carbon-oxygen lyase activity"/>
    <property type="evidence" value="ECO:0007669"/>
    <property type="project" value="UniProtKB-UniRule"/>
</dbReference>
<dbReference type="GO" id="GO:0016803">
    <property type="term" value="F:ether hydrolase activity"/>
    <property type="evidence" value="ECO:0007669"/>
    <property type="project" value="TreeGrafter"/>
</dbReference>
<dbReference type="GO" id="GO:0097175">
    <property type="term" value="P:1,6-anhydro-N-acetyl-beta-muramic acid catabolic process"/>
    <property type="evidence" value="ECO:0007669"/>
    <property type="project" value="UniProtKB-UniRule"/>
</dbReference>
<dbReference type="GO" id="GO:0046348">
    <property type="term" value="P:amino sugar catabolic process"/>
    <property type="evidence" value="ECO:0007669"/>
    <property type="project" value="InterPro"/>
</dbReference>
<dbReference type="GO" id="GO:0097173">
    <property type="term" value="P:N-acetylmuramic acid catabolic process"/>
    <property type="evidence" value="ECO:0007669"/>
    <property type="project" value="UniProtKB-UniPathway"/>
</dbReference>
<dbReference type="GO" id="GO:0009254">
    <property type="term" value="P:peptidoglycan turnover"/>
    <property type="evidence" value="ECO:0007669"/>
    <property type="project" value="UniProtKB-UniRule"/>
</dbReference>
<dbReference type="CDD" id="cd05007">
    <property type="entry name" value="SIS_Etherase"/>
    <property type="match status" value="1"/>
</dbReference>
<dbReference type="FunFam" id="1.10.8.1080:FF:000001">
    <property type="entry name" value="N-acetylmuramic acid 6-phosphate etherase"/>
    <property type="match status" value="1"/>
</dbReference>
<dbReference type="FunFam" id="3.40.50.10490:FF:000014">
    <property type="entry name" value="N-acetylmuramic acid 6-phosphate etherase"/>
    <property type="match status" value="1"/>
</dbReference>
<dbReference type="Gene3D" id="1.10.8.1080">
    <property type="match status" value="1"/>
</dbReference>
<dbReference type="Gene3D" id="3.40.50.10490">
    <property type="entry name" value="Glucose-6-phosphate isomerase like protein, domain 1"/>
    <property type="match status" value="1"/>
</dbReference>
<dbReference type="HAMAP" id="MF_00068">
    <property type="entry name" value="MurQ"/>
    <property type="match status" value="1"/>
</dbReference>
<dbReference type="InterPro" id="IPR005488">
    <property type="entry name" value="Etherase_MurQ"/>
</dbReference>
<dbReference type="InterPro" id="IPR005486">
    <property type="entry name" value="Glucokinase_regulatory_CS"/>
</dbReference>
<dbReference type="InterPro" id="IPR040190">
    <property type="entry name" value="MURQ/GCKR"/>
</dbReference>
<dbReference type="InterPro" id="IPR001347">
    <property type="entry name" value="SIS_dom"/>
</dbReference>
<dbReference type="InterPro" id="IPR046348">
    <property type="entry name" value="SIS_dom_sf"/>
</dbReference>
<dbReference type="InterPro" id="IPR009060">
    <property type="entry name" value="UBA-like_sf"/>
</dbReference>
<dbReference type="NCBIfam" id="TIGR00274">
    <property type="entry name" value="N-acetylmuramic acid 6-phosphate etherase"/>
    <property type="match status" value="1"/>
</dbReference>
<dbReference type="NCBIfam" id="NF003915">
    <property type="entry name" value="PRK05441.1"/>
    <property type="match status" value="1"/>
</dbReference>
<dbReference type="NCBIfam" id="NF009222">
    <property type="entry name" value="PRK12570.1"/>
    <property type="match status" value="1"/>
</dbReference>
<dbReference type="PANTHER" id="PTHR10088">
    <property type="entry name" value="GLUCOKINASE REGULATORY PROTEIN"/>
    <property type="match status" value="1"/>
</dbReference>
<dbReference type="PANTHER" id="PTHR10088:SF5">
    <property type="entry name" value="N-ACETYLMURAMIC ACID 6-PHOSPHATE ETHERASE"/>
    <property type="match status" value="1"/>
</dbReference>
<dbReference type="Pfam" id="PF20741">
    <property type="entry name" value="GKRP-like_C"/>
    <property type="match status" value="1"/>
</dbReference>
<dbReference type="Pfam" id="PF22645">
    <property type="entry name" value="GKRP_SIS_N"/>
    <property type="match status" value="1"/>
</dbReference>
<dbReference type="SUPFAM" id="SSF53697">
    <property type="entry name" value="SIS domain"/>
    <property type="match status" value="1"/>
</dbReference>
<dbReference type="SUPFAM" id="SSF46934">
    <property type="entry name" value="UBA-like"/>
    <property type="match status" value="1"/>
</dbReference>
<dbReference type="PROSITE" id="PS01272">
    <property type="entry name" value="GCKR"/>
    <property type="match status" value="1"/>
</dbReference>
<dbReference type="PROSITE" id="PS51464">
    <property type="entry name" value="SIS"/>
    <property type="match status" value="1"/>
</dbReference>
<gene>
    <name evidence="1" type="primary">murQ</name>
    <name type="ordered locus">Ent638_3047</name>
</gene>
<organism>
    <name type="scientific">Enterobacter sp. (strain 638)</name>
    <dbReference type="NCBI Taxonomy" id="399742"/>
    <lineage>
        <taxon>Bacteria</taxon>
        <taxon>Pseudomonadati</taxon>
        <taxon>Pseudomonadota</taxon>
        <taxon>Gammaproteobacteria</taxon>
        <taxon>Enterobacterales</taxon>
        <taxon>Enterobacteriaceae</taxon>
        <taxon>Enterobacter</taxon>
    </lineage>
</organism>
<comment type="function">
    <text evidence="1">Specifically catalyzes the cleavage of the D-lactyl ether substituent of MurNAc 6-phosphate, producing GlcNAc 6-phosphate and D-lactate. Together with AnmK, is also required for the utilization of anhydro-N-acetylmuramic acid (anhMurNAc) either imported from the medium or derived from its own cell wall murein, and thus plays a role in cell wall recycling.</text>
</comment>
<comment type="catalytic activity">
    <reaction evidence="1">
        <text>N-acetyl-D-muramate 6-phosphate + H2O = N-acetyl-D-glucosamine 6-phosphate + (R)-lactate</text>
        <dbReference type="Rhea" id="RHEA:26410"/>
        <dbReference type="ChEBI" id="CHEBI:15377"/>
        <dbReference type="ChEBI" id="CHEBI:16004"/>
        <dbReference type="ChEBI" id="CHEBI:57513"/>
        <dbReference type="ChEBI" id="CHEBI:58722"/>
        <dbReference type="EC" id="4.2.1.126"/>
    </reaction>
</comment>
<comment type="pathway">
    <text evidence="1">Amino-sugar metabolism; 1,6-anhydro-N-acetylmuramate degradation.</text>
</comment>
<comment type="pathway">
    <text evidence="1">Amino-sugar metabolism; N-acetylmuramate degradation.</text>
</comment>
<comment type="pathway">
    <text evidence="1">Cell wall biogenesis; peptidoglycan recycling.</text>
</comment>
<comment type="subunit">
    <text evidence="1">Homodimer.</text>
</comment>
<comment type="induction">
    <text evidence="1">Induced by MurNAc 6-phosphate that releases the repressor MurR from the DNA. Repressed by MurR in the absence of MurNAc 6-phosphate.</text>
</comment>
<comment type="miscellaneous">
    <text evidence="1">A lyase-type mechanism (elimination/hydration) is suggested for the cleavage of the lactyl ether bond of MurNAc 6-phosphate, with the formation of an alpha,beta-unsaturated aldehyde intermediate with (E)-stereochemistry, followed by the syn addition of water to give product.</text>
</comment>
<comment type="similarity">
    <text evidence="1">Belongs to the GCKR-like family. MurNAc-6-P etherase subfamily.</text>
</comment>
<sequence>MNLGSLVSESRNPQTMDLDALSTFDLVTRFNQQDTLVALAVKETLPEVAKAVDAATDALKSGGRIIYMGAGTSGRLGVLDASECPPTFGVPHGLVLGLIAGGPGALLKAVEGAEDNQQLGADDLIAIHLTANDLVVGLAASGRTPYVIGGLEYAKQLGCTTVAISCNPVSPIAQVAAIAISPVVGPEALTGSTRLKSGTAQKLVLNMISTGAMVKFGKVYQNLMVDMQATNIKLVDRACRMVVQATGASREEAEAALKQTDHDVKPAILMILSGLDAAAARAKLDAHQGFLRAALEN</sequence>
<feature type="chain" id="PRO_1000057459" description="N-acetylmuramic acid 6-phosphate etherase">
    <location>
        <begin position="1"/>
        <end position="297"/>
    </location>
</feature>
<feature type="domain" description="SIS" evidence="1">
    <location>
        <begin position="55"/>
        <end position="218"/>
    </location>
</feature>
<feature type="active site" description="Proton donor" evidence="1">
    <location>
        <position position="83"/>
    </location>
</feature>
<feature type="active site" evidence="1">
    <location>
        <position position="114"/>
    </location>
</feature>
<proteinExistence type="inferred from homology"/>